<comment type="function">
    <text evidence="1">Involved in nonsense-mediated decay (NMD) of mRNAs containing premature stop codons. Is recruited by release factors to stalled ribosomes together with SMG1 and SMG9 (forming the SMG1C protein kinase complex) and, in the SMG1C complex, is required to mediate the recruitment of SMG1 to the ribosome:SURF complex and to suppress SMG1 kinase activity until the ribosome:SURF complex locates the exon junction complex (EJC). Acts as a regulator of kinase activity (By similarity).</text>
</comment>
<comment type="subunit">
    <text evidence="1">Component of the SMG1C complex composed of SMG1, SMG8 and SMG9; the recruitment of SMG8 to SMG1 N-terminus induces a large conformational change in the SMG1 C-terminal head domain containing the catalytic domain. Forms heterodimers with SMG9; this assembly form may represent a SMG1C intermediate form (By similarity).</text>
</comment>
<comment type="PTM">
    <text evidence="1">Phosphorylated by SMG1.</text>
</comment>
<comment type="similarity">
    <text evidence="4">Belongs to the SMG8 family.</text>
</comment>
<sequence length="991" mass="109667">MAGPVSLRELLMGASAWLGSESPGGPSAEGGGNAAGTPEPPWREDEICVVGIFGKTALRLNSEKFSLVNTVCDRQVFPLFHHQDPGDPGTGIKTKAVSVGEAGGAGDPGAAAGDSLRGGMATAEGNRAEPGPQDFSLLQAYYNQESKVLYLILTSICDNSQLLRACRALQSGEAGGGLSLPHAETHEFWKHQEKLQCLSLLYLFSVCHILLLVHPTCSFDITYDRVFRALDGLRQKVLPLLKTAIKDCPVGKDWKLNCRPCPPRLLFLFQLNGALKVEPPRSQDTAHPDKPKKHSPKRRLQHALEDQIYRIFRKSRVLTNQSINCLFTVPANQAFVYIVPGSQEEDPIGMLLDQLRSHCTVKDPESLLVPAPLSGPRRYQAMRQHSRQQLSFHIDSSTSSSSGQLVDFTLREFLWQHVELVLSKKGFDDSVGRNPQPSHFELPTYQKWISAAAKLYEVAIDGKEEDLGSPTGELTSKILSSIKVLEGFLDIDTKFSENRCQKALPMAHSAYQSNLPHNYTMTVHKNQLAQALRVYSQHARGPAFHKYAMQLHEDCYKFWSNGHQLCEERSLTDQHCVHKFHSLPKSGEKPEADRNPPVLYHNSRARSTGACNCGRKQAPRDDPFDIKAANYDFYQLLEEKCCGKLDHINFPVFEPSTPDPAPAKNEPSPAPPDSDAEKLKEKEPQTQGESTSLSLALSLGQSTDSLGTYPADPQAGGDNPEVHGQGEGKSEKRPNLVDRQASTVEYLPGMLHSNCPKGLLPKFSSWSLVKLGPAKSYNFHTGLDQQGFVPGTNYLMPWDIVIRTRAEDEGDLDTNSWPAPNKAIPGKRSAVVMGRGRRRDDIARAFVGFEYEDSRGRRFMCSGPDKVMKVMGSGPKESALKALNSDMPLYILSSSQGRGLKPHYAQLMRLFVVVPDAPLQIILMPQVQPGPPPCPVFYPEKQEITLPPDGLWVLRFPYAYVTERGPCFPPKENVQLMSYKVLRGVLKAVTQ</sequence>
<organism>
    <name type="scientific">Mus musculus</name>
    <name type="common">Mouse</name>
    <dbReference type="NCBI Taxonomy" id="10090"/>
    <lineage>
        <taxon>Eukaryota</taxon>
        <taxon>Metazoa</taxon>
        <taxon>Chordata</taxon>
        <taxon>Craniata</taxon>
        <taxon>Vertebrata</taxon>
        <taxon>Euteleostomi</taxon>
        <taxon>Mammalia</taxon>
        <taxon>Eutheria</taxon>
        <taxon>Euarchontoglires</taxon>
        <taxon>Glires</taxon>
        <taxon>Rodentia</taxon>
        <taxon>Myomorpha</taxon>
        <taxon>Muroidea</taxon>
        <taxon>Muridae</taxon>
        <taxon>Murinae</taxon>
        <taxon>Mus</taxon>
        <taxon>Mus</taxon>
    </lineage>
</organism>
<gene>
    <name type="primary">Smg8</name>
</gene>
<evidence type="ECO:0000250" key="1"/>
<evidence type="ECO:0000250" key="2">
    <source>
        <dbReference type="UniProtKB" id="Q8ND04"/>
    </source>
</evidence>
<evidence type="ECO:0000256" key="3">
    <source>
        <dbReference type="SAM" id="MobiDB-lite"/>
    </source>
</evidence>
<evidence type="ECO:0000305" key="4"/>
<evidence type="ECO:0000312" key="5">
    <source>
        <dbReference type="MGI" id="MGI:1921383"/>
    </source>
</evidence>
<evidence type="ECO:0007744" key="6">
    <source>
    </source>
</evidence>
<protein>
    <recommendedName>
        <fullName evidence="5">Nonsense-mediated mRNA decay factor SMG8</fullName>
    </recommendedName>
    <alternativeName>
        <fullName>Protein smg-8 homolog</fullName>
    </alternativeName>
</protein>
<accession>Q8VE18</accession>
<accession>B2KGQ4</accession>
<accession>Q8BS62</accession>
<accession>Q8BSP7</accession>
<accession>Q9DBW6</accession>
<feature type="chain" id="PRO_0000304975" description="Nonsense-mediated mRNA decay factor SMG8">
    <location>
        <begin position="1"/>
        <end position="991"/>
    </location>
</feature>
<feature type="region of interest" description="Disordered" evidence="3">
    <location>
        <begin position="18"/>
        <end position="41"/>
    </location>
</feature>
<feature type="region of interest" description="Disordered" evidence="3">
    <location>
        <begin position="100"/>
        <end position="129"/>
    </location>
</feature>
<feature type="region of interest" description="Disordered" evidence="3">
    <location>
        <begin position="278"/>
        <end position="299"/>
    </location>
</feature>
<feature type="region of interest" description="Disordered" evidence="3">
    <location>
        <begin position="653"/>
        <end position="738"/>
    </location>
</feature>
<feature type="compositionally biased region" description="Basic and acidic residues" evidence="3">
    <location>
        <begin position="278"/>
        <end position="289"/>
    </location>
</feature>
<feature type="compositionally biased region" description="Basic residues" evidence="3">
    <location>
        <begin position="290"/>
        <end position="299"/>
    </location>
</feature>
<feature type="compositionally biased region" description="Basic and acidic residues" evidence="3">
    <location>
        <begin position="675"/>
        <end position="684"/>
    </location>
</feature>
<feature type="compositionally biased region" description="Polar residues" evidence="3">
    <location>
        <begin position="685"/>
        <end position="706"/>
    </location>
</feature>
<feature type="compositionally biased region" description="Basic and acidic residues" evidence="3">
    <location>
        <begin position="720"/>
        <end position="736"/>
    </location>
</feature>
<feature type="modified residue" description="Phosphoserine" evidence="2">
    <location>
        <position position="115"/>
    </location>
</feature>
<feature type="modified residue" description="Phosphoserine" evidence="2">
    <location>
        <position position="469"/>
    </location>
</feature>
<feature type="modified residue" description="Phosphoserine" evidence="2">
    <location>
        <position position="668"/>
    </location>
</feature>
<feature type="modified residue" description="Phosphoserine" evidence="2">
    <location>
        <position position="742"/>
    </location>
</feature>
<feature type="modified residue" description="Phosphoserine" evidence="2">
    <location>
        <position position="895"/>
    </location>
</feature>
<feature type="modified residue" description="Omega-N-methylarginine" evidence="6">
    <location>
        <position position="898"/>
    </location>
</feature>
<feature type="sequence conflict" description="In Ref. 1; BAC27255." evidence="4" ref="1">
    <original>T</original>
    <variation>N</variation>
    <location>
        <position position="222"/>
    </location>
</feature>
<feature type="sequence conflict" description="In Ref. 1; BAC27255." evidence="4" ref="1">
    <original>S</original>
    <variation>R</variation>
    <location>
        <position position="829"/>
    </location>
</feature>
<feature type="sequence conflict" description="In Ref. 1; BAC27255." evidence="4" ref="1">
    <original>A</original>
    <variation>D</variation>
    <location>
        <position position="845"/>
    </location>
</feature>
<proteinExistence type="evidence at protein level"/>
<keyword id="KW-0488">Methylation</keyword>
<keyword id="KW-0866">Nonsense-mediated mRNA decay</keyword>
<keyword id="KW-0597">Phosphoprotein</keyword>
<keyword id="KW-1185">Reference proteome</keyword>
<dbReference type="EMBL" id="AK004714">
    <property type="protein sequence ID" value="BAB23498.2"/>
    <property type="molecule type" value="mRNA"/>
</dbReference>
<dbReference type="EMBL" id="AK031106">
    <property type="protein sequence ID" value="BAC27255.1"/>
    <property type="molecule type" value="mRNA"/>
</dbReference>
<dbReference type="EMBL" id="AK035089">
    <property type="protein sequence ID" value="BAC28941.1"/>
    <property type="molecule type" value="mRNA"/>
</dbReference>
<dbReference type="EMBL" id="AL713917">
    <property type="status" value="NOT_ANNOTATED_CDS"/>
    <property type="molecule type" value="Genomic_DNA"/>
</dbReference>
<dbReference type="EMBL" id="CU407131">
    <property type="status" value="NOT_ANNOTATED_CDS"/>
    <property type="molecule type" value="Genomic_DNA"/>
</dbReference>
<dbReference type="EMBL" id="BC020005">
    <property type="protein sequence ID" value="AAH20005.1"/>
    <property type="molecule type" value="mRNA"/>
</dbReference>
<dbReference type="CCDS" id="CCDS25207.1"/>
<dbReference type="RefSeq" id="NP_077224.1">
    <property type="nucleotide sequence ID" value="NM_024262.1"/>
</dbReference>
<dbReference type="SMR" id="Q8VE18"/>
<dbReference type="BioGRID" id="216516">
    <property type="interactions" value="1"/>
</dbReference>
<dbReference type="FunCoup" id="Q8VE18">
    <property type="interactions" value="873"/>
</dbReference>
<dbReference type="STRING" id="10090.ENSMUSP00000020801"/>
<dbReference type="GlyGen" id="Q8VE18">
    <property type="glycosylation" value="1 site, 1 N-linked glycan (1 site)"/>
</dbReference>
<dbReference type="iPTMnet" id="Q8VE18"/>
<dbReference type="PhosphoSitePlus" id="Q8VE18"/>
<dbReference type="SwissPalm" id="Q8VE18"/>
<dbReference type="jPOST" id="Q8VE18"/>
<dbReference type="PaxDb" id="10090-ENSMUSP00000020801"/>
<dbReference type="PeptideAtlas" id="Q8VE18"/>
<dbReference type="ProteomicsDB" id="261262"/>
<dbReference type="Pumba" id="Q8VE18"/>
<dbReference type="Antibodypedia" id="31075">
    <property type="antibodies" value="53 antibodies from 18 providers"/>
</dbReference>
<dbReference type="DNASU" id="74133"/>
<dbReference type="Ensembl" id="ENSMUST00000020801.14">
    <property type="protein sequence ID" value="ENSMUSP00000020801.8"/>
    <property type="gene ID" value="ENSMUSG00000020495.14"/>
</dbReference>
<dbReference type="GeneID" id="74133"/>
<dbReference type="KEGG" id="mmu:74133"/>
<dbReference type="UCSC" id="uc007ktg.1">
    <property type="organism name" value="mouse"/>
</dbReference>
<dbReference type="AGR" id="MGI:1921383"/>
<dbReference type="CTD" id="55181"/>
<dbReference type="MGI" id="MGI:1921383">
    <property type="gene designation" value="Smg8"/>
</dbReference>
<dbReference type="VEuPathDB" id="HostDB:ENSMUSG00000020495"/>
<dbReference type="eggNOG" id="KOG3692">
    <property type="taxonomic scope" value="Eukaryota"/>
</dbReference>
<dbReference type="GeneTree" id="ENSGT00390000018533"/>
<dbReference type="HOGENOM" id="CLU_008116_0_0_1"/>
<dbReference type="InParanoid" id="Q8VE18"/>
<dbReference type="OMA" id="MHSGCPK"/>
<dbReference type="OrthoDB" id="63589at2759"/>
<dbReference type="PhylomeDB" id="Q8VE18"/>
<dbReference type="TreeFam" id="TF323445"/>
<dbReference type="Reactome" id="R-MMU-975957">
    <property type="pathway name" value="Nonsense Mediated Decay (NMD) enhanced by the Exon Junction Complex (EJC)"/>
</dbReference>
<dbReference type="BioGRID-ORCS" id="74133">
    <property type="hits" value="13 hits in 79 CRISPR screens"/>
</dbReference>
<dbReference type="ChiTaRS" id="Smg8">
    <property type="organism name" value="mouse"/>
</dbReference>
<dbReference type="PRO" id="PR:Q8VE18"/>
<dbReference type="Proteomes" id="UP000000589">
    <property type="component" value="Chromosome 11"/>
</dbReference>
<dbReference type="RNAct" id="Q8VE18">
    <property type="molecule type" value="protein"/>
</dbReference>
<dbReference type="Bgee" id="ENSMUSG00000020495">
    <property type="expression patterns" value="Expressed in secondary oocyte and 187 other cell types or tissues"/>
</dbReference>
<dbReference type="ExpressionAtlas" id="Q8VE18">
    <property type="expression patterns" value="baseline and differential"/>
</dbReference>
<dbReference type="GO" id="GO:0000184">
    <property type="term" value="P:nuclear-transcribed mRNA catabolic process, nonsense-mediated decay"/>
    <property type="evidence" value="ECO:0000250"/>
    <property type="project" value="UniProtKB"/>
</dbReference>
<dbReference type="GO" id="GO:0045859">
    <property type="term" value="P:regulation of protein kinase activity"/>
    <property type="evidence" value="ECO:0000250"/>
    <property type="project" value="UniProtKB"/>
</dbReference>
<dbReference type="InterPro" id="IPR019354">
    <property type="entry name" value="SMG8-like"/>
</dbReference>
<dbReference type="PANTHER" id="PTHR13091">
    <property type="entry name" value="AMPLIFIED IN BREAST CANCER 2-RELATED"/>
    <property type="match status" value="1"/>
</dbReference>
<dbReference type="PANTHER" id="PTHR13091:SF0">
    <property type="entry name" value="NONSENSE-MEDIATED MRNA DECAY FACTOR SMG8"/>
    <property type="match status" value="1"/>
</dbReference>
<dbReference type="Pfam" id="PF10220">
    <property type="entry name" value="Smg8_Smg9"/>
    <property type="match status" value="1"/>
</dbReference>
<reference key="1">
    <citation type="journal article" date="2005" name="Science">
        <title>The transcriptional landscape of the mammalian genome.</title>
        <authorList>
            <person name="Carninci P."/>
            <person name="Kasukawa T."/>
            <person name="Katayama S."/>
            <person name="Gough J."/>
            <person name="Frith M.C."/>
            <person name="Maeda N."/>
            <person name="Oyama R."/>
            <person name="Ravasi T."/>
            <person name="Lenhard B."/>
            <person name="Wells C."/>
            <person name="Kodzius R."/>
            <person name="Shimokawa K."/>
            <person name="Bajic V.B."/>
            <person name="Brenner S.E."/>
            <person name="Batalov S."/>
            <person name="Forrest A.R."/>
            <person name="Zavolan M."/>
            <person name="Davis M.J."/>
            <person name="Wilming L.G."/>
            <person name="Aidinis V."/>
            <person name="Allen J.E."/>
            <person name="Ambesi-Impiombato A."/>
            <person name="Apweiler R."/>
            <person name="Aturaliya R.N."/>
            <person name="Bailey T.L."/>
            <person name="Bansal M."/>
            <person name="Baxter L."/>
            <person name="Beisel K.W."/>
            <person name="Bersano T."/>
            <person name="Bono H."/>
            <person name="Chalk A.M."/>
            <person name="Chiu K.P."/>
            <person name="Choudhary V."/>
            <person name="Christoffels A."/>
            <person name="Clutterbuck D.R."/>
            <person name="Crowe M.L."/>
            <person name="Dalla E."/>
            <person name="Dalrymple B.P."/>
            <person name="de Bono B."/>
            <person name="Della Gatta G."/>
            <person name="di Bernardo D."/>
            <person name="Down T."/>
            <person name="Engstrom P."/>
            <person name="Fagiolini M."/>
            <person name="Faulkner G."/>
            <person name="Fletcher C.F."/>
            <person name="Fukushima T."/>
            <person name="Furuno M."/>
            <person name="Futaki S."/>
            <person name="Gariboldi M."/>
            <person name="Georgii-Hemming P."/>
            <person name="Gingeras T.R."/>
            <person name="Gojobori T."/>
            <person name="Green R.E."/>
            <person name="Gustincich S."/>
            <person name="Harbers M."/>
            <person name="Hayashi Y."/>
            <person name="Hensch T.K."/>
            <person name="Hirokawa N."/>
            <person name="Hill D."/>
            <person name="Huminiecki L."/>
            <person name="Iacono M."/>
            <person name="Ikeo K."/>
            <person name="Iwama A."/>
            <person name="Ishikawa T."/>
            <person name="Jakt M."/>
            <person name="Kanapin A."/>
            <person name="Katoh M."/>
            <person name="Kawasawa Y."/>
            <person name="Kelso J."/>
            <person name="Kitamura H."/>
            <person name="Kitano H."/>
            <person name="Kollias G."/>
            <person name="Krishnan S.P."/>
            <person name="Kruger A."/>
            <person name="Kummerfeld S.K."/>
            <person name="Kurochkin I.V."/>
            <person name="Lareau L.F."/>
            <person name="Lazarevic D."/>
            <person name="Lipovich L."/>
            <person name="Liu J."/>
            <person name="Liuni S."/>
            <person name="McWilliam S."/>
            <person name="Madan Babu M."/>
            <person name="Madera M."/>
            <person name="Marchionni L."/>
            <person name="Matsuda H."/>
            <person name="Matsuzawa S."/>
            <person name="Miki H."/>
            <person name="Mignone F."/>
            <person name="Miyake S."/>
            <person name="Morris K."/>
            <person name="Mottagui-Tabar S."/>
            <person name="Mulder N."/>
            <person name="Nakano N."/>
            <person name="Nakauchi H."/>
            <person name="Ng P."/>
            <person name="Nilsson R."/>
            <person name="Nishiguchi S."/>
            <person name="Nishikawa S."/>
            <person name="Nori F."/>
            <person name="Ohara O."/>
            <person name="Okazaki Y."/>
            <person name="Orlando V."/>
            <person name="Pang K.C."/>
            <person name="Pavan W.J."/>
            <person name="Pavesi G."/>
            <person name="Pesole G."/>
            <person name="Petrovsky N."/>
            <person name="Piazza S."/>
            <person name="Reed J."/>
            <person name="Reid J.F."/>
            <person name="Ring B.Z."/>
            <person name="Ringwald M."/>
            <person name="Rost B."/>
            <person name="Ruan Y."/>
            <person name="Salzberg S.L."/>
            <person name="Sandelin A."/>
            <person name="Schneider C."/>
            <person name="Schoenbach C."/>
            <person name="Sekiguchi K."/>
            <person name="Semple C.A."/>
            <person name="Seno S."/>
            <person name="Sessa L."/>
            <person name="Sheng Y."/>
            <person name="Shibata Y."/>
            <person name="Shimada H."/>
            <person name="Shimada K."/>
            <person name="Silva D."/>
            <person name="Sinclair B."/>
            <person name="Sperling S."/>
            <person name="Stupka E."/>
            <person name="Sugiura K."/>
            <person name="Sultana R."/>
            <person name="Takenaka Y."/>
            <person name="Taki K."/>
            <person name="Tammoja K."/>
            <person name="Tan S.L."/>
            <person name="Tang S."/>
            <person name="Taylor M.S."/>
            <person name="Tegner J."/>
            <person name="Teichmann S.A."/>
            <person name="Ueda H.R."/>
            <person name="van Nimwegen E."/>
            <person name="Verardo R."/>
            <person name="Wei C.L."/>
            <person name="Yagi K."/>
            <person name="Yamanishi H."/>
            <person name="Zabarovsky E."/>
            <person name="Zhu S."/>
            <person name="Zimmer A."/>
            <person name="Hide W."/>
            <person name="Bult C."/>
            <person name="Grimmond S.M."/>
            <person name="Teasdale R.D."/>
            <person name="Liu E.T."/>
            <person name="Brusic V."/>
            <person name="Quackenbush J."/>
            <person name="Wahlestedt C."/>
            <person name="Mattick J.S."/>
            <person name="Hume D.A."/>
            <person name="Kai C."/>
            <person name="Sasaki D."/>
            <person name="Tomaru Y."/>
            <person name="Fukuda S."/>
            <person name="Kanamori-Katayama M."/>
            <person name="Suzuki M."/>
            <person name="Aoki J."/>
            <person name="Arakawa T."/>
            <person name="Iida J."/>
            <person name="Imamura K."/>
            <person name="Itoh M."/>
            <person name="Kato T."/>
            <person name="Kawaji H."/>
            <person name="Kawagashira N."/>
            <person name="Kawashima T."/>
            <person name="Kojima M."/>
            <person name="Kondo S."/>
            <person name="Konno H."/>
            <person name="Nakano K."/>
            <person name="Ninomiya N."/>
            <person name="Nishio T."/>
            <person name="Okada M."/>
            <person name="Plessy C."/>
            <person name="Shibata K."/>
            <person name="Shiraki T."/>
            <person name="Suzuki S."/>
            <person name="Tagami M."/>
            <person name="Waki K."/>
            <person name="Watahiki A."/>
            <person name="Okamura-Oho Y."/>
            <person name="Suzuki H."/>
            <person name="Kawai J."/>
            <person name="Hayashizaki Y."/>
        </authorList>
    </citation>
    <scope>NUCLEOTIDE SEQUENCE [LARGE SCALE MRNA]</scope>
    <source>
        <strain>C57BL/6J</strain>
        <tissue>Embryo</tissue>
        <tissue>Forelimb</tissue>
        <tissue>Lung</tissue>
    </source>
</reference>
<reference key="2">
    <citation type="journal article" date="2009" name="PLoS Biol.">
        <title>Lineage-specific biology revealed by a finished genome assembly of the mouse.</title>
        <authorList>
            <person name="Church D.M."/>
            <person name="Goodstadt L."/>
            <person name="Hillier L.W."/>
            <person name="Zody M.C."/>
            <person name="Goldstein S."/>
            <person name="She X."/>
            <person name="Bult C.J."/>
            <person name="Agarwala R."/>
            <person name="Cherry J.L."/>
            <person name="DiCuccio M."/>
            <person name="Hlavina W."/>
            <person name="Kapustin Y."/>
            <person name="Meric P."/>
            <person name="Maglott D."/>
            <person name="Birtle Z."/>
            <person name="Marques A.C."/>
            <person name="Graves T."/>
            <person name="Zhou S."/>
            <person name="Teague B."/>
            <person name="Potamousis K."/>
            <person name="Churas C."/>
            <person name="Place M."/>
            <person name="Herschleb J."/>
            <person name="Runnheim R."/>
            <person name="Forrest D."/>
            <person name="Amos-Landgraf J."/>
            <person name="Schwartz D.C."/>
            <person name="Cheng Z."/>
            <person name="Lindblad-Toh K."/>
            <person name="Eichler E.E."/>
            <person name="Ponting C.P."/>
        </authorList>
    </citation>
    <scope>NUCLEOTIDE SEQUENCE [LARGE SCALE GENOMIC DNA]</scope>
    <source>
        <strain>C57BL/6J</strain>
    </source>
</reference>
<reference key="3">
    <citation type="journal article" date="2004" name="Genome Res.">
        <title>The status, quality, and expansion of the NIH full-length cDNA project: the Mammalian Gene Collection (MGC).</title>
        <authorList>
            <consortium name="The MGC Project Team"/>
        </authorList>
    </citation>
    <scope>NUCLEOTIDE SEQUENCE [LARGE SCALE MRNA]</scope>
    <source>
        <strain>FVB/N</strain>
        <tissue>Mammary tumor</tissue>
    </source>
</reference>
<reference key="4">
    <citation type="journal article" date="2010" name="Cell">
        <title>A tissue-specific atlas of mouse protein phosphorylation and expression.</title>
        <authorList>
            <person name="Huttlin E.L."/>
            <person name="Jedrychowski M.P."/>
            <person name="Elias J.E."/>
            <person name="Goswami T."/>
            <person name="Rad R."/>
            <person name="Beausoleil S.A."/>
            <person name="Villen J."/>
            <person name="Haas W."/>
            <person name="Sowa M.E."/>
            <person name="Gygi S.P."/>
        </authorList>
    </citation>
    <scope>IDENTIFICATION BY MASS SPECTROMETRY [LARGE SCALE ANALYSIS]</scope>
    <source>
        <tissue>Brain</tissue>
        <tissue>Brown adipose tissue</tissue>
        <tissue>Heart</tissue>
        <tissue>Liver</tissue>
        <tissue>Pancreas</tissue>
        <tissue>Spleen</tissue>
        <tissue>Testis</tissue>
    </source>
</reference>
<reference key="5">
    <citation type="journal article" date="2014" name="Mol. Cell. Proteomics">
        <title>Immunoaffinity enrichment and mass spectrometry analysis of protein methylation.</title>
        <authorList>
            <person name="Guo A."/>
            <person name="Gu H."/>
            <person name="Zhou J."/>
            <person name="Mulhern D."/>
            <person name="Wang Y."/>
            <person name="Lee K.A."/>
            <person name="Yang V."/>
            <person name="Aguiar M."/>
            <person name="Kornhauser J."/>
            <person name="Jia X."/>
            <person name="Ren J."/>
            <person name="Beausoleil S.A."/>
            <person name="Silva J.C."/>
            <person name="Vemulapalli V."/>
            <person name="Bedford M.T."/>
            <person name="Comb M.J."/>
        </authorList>
    </citation>
    <scope>METHYLATION [LARGE SCALE ANALYSIS] AT ARG-898</scope>
    <scope>IDENTIFICATION BY MASS SPECTROMETRY [LARGE SCALE ANALYSIS]</scope>
    <source>
        <tissue>Embryo</tissue>
    </source>
</reference>
<name>SMG8_MOUSE</name>